<sequence>MYRQAKWDEPLIFELSRPGRVGYTLPKPIEDVDVEIPEKLKRKSPLNLPEVSEPEVVKHYTRLSEMNYGVDSGIYPLGSCTMKYNPKINEELAGHPKVAYIHPYQDERTVQGALRIMWELEQWLKEITGMDRFTLQPAAGANGEFTGVMIIKAYHLDRGETQRNEMLVPDSAHGTNPASAAMAGFKVIEIPSNENGTVDLEALENAVSERTAGLMLTNPNTLGIFEDEIEEIAKIVHKAGGLLYYDGANLNGILGKVRPGDMGFDIVHLNLHKTFSTPHGGGGPGAGPVGVKEFLKDYLPVPLVSYDEENDRYYLDYDVPKSIGKVKELFGNFAVLVRALTYLKVMGKDGLREVSEVAVLNANYLARKLKGTRGYELPHKELRKHEVVFSAEPMKRETGVRTLDVAKRLLDFGMHAPTIYFPLIVHEALMIEPTETVSKEELDAYVEAMKKISEEAYTNPEVVKSAPHNTAVRRVDDVLASKKPIITWKMYKELKEKGEVDY</sequence>
<gene>
    <name evidence="1" type="primary">gcvPB</name>
    <name type="ordered locus">PYRAB17770</name>
    <name type="ORF">PAB1172</name>
</gene>
<keyword id="KW-0560">Oxidoreductase</keyword>
<keyword id="KW-0663">Pyridoxal phosphate</keyword>
<dbReference type="EC" id="1.4.4.2" evidence="1"/>
<dbReference type="EMBL" id="AJ248288">
    <property type="protein sequence ID" value="CAB50682.1"/>
    <property type="molecule type" value="Genomic_DNA"/>
</dbReference>
<dbReference type="EMBL" id="HE613800">
    <property type="protein sequence ID" value="CCE71251.1"/>
    <property type="molecule type" value="Genomic_DNA"/>
</dbReference>
<dbReference type="PIR" id="D75030">
    <property type="entry name" value="D75030"/>
</dbReference>
<dbReference type="RefSeq" id="WP_010868896.1">
    <property type="nucleotide sequence ID" value="NC_000868.1"/>
</dbReference>
<dbReference type="SMR" id="Q9UXT1"/>
<dbReference type="STRING" id="272844.PAB1172"/>
<dbReference type="KEGG" id="pab:PAB1172"/>
<dbReference type="PATRIC" id="fig|272844.11.peg.1896"/>
<dbReference type="eggNOG" id="arCOG00076">
    <property type="taxonomic scope" value="Archaea"/>
</dbReference>
<dbReference type="HOGENOM" id="CLU_004620_5_0_2"/>
<dbReference type="OrthoDB" id="371967at2157"/>
<dbReference type="PhylomeDB" id="Q9UXT1"/>
<dbReference type="Proteomes" id="UP000000810">
    <property type="component" value="Chromosome"/>
</dbReference>
<dbReference type="Proteomes" id="UP000009139">
    <property type="component" value="Chromosome"/>
</dbReference>
<dbReference type="GO" id="GO:0005829">
    <property type="term" value="C:cytosol"/>
    <property type="evidence" value="ECO:0007669"/>
    <property type="project" value="TreeGrafter"/>
</dbReference>
<dbReference type="GO" id="GO:0005960">
    <property type="term" value="C:glycine cleavage complex"/>
    <property type="evidence" value="ECO:0007669"/>
    <property type="project" value="TreeGrafter"/>
</dbReference>
<dbReference type="GO" id="GO:0016594">
    <property type="term" value="F:glycine binding"/>
    <property type="evidence" value="ECO:0007669"/>
    <property type="project" value="TreeGrafter"/>
</dbReference>
<dbReference type="GO" id="GO:0004375">
    <property type="term" value="F:glycine dehydrogenase (decarboxylating) activity"/>
    <property type="evidence" value="ECO:0007669"/>
    <property type="project" value="UniProtKB-EC"/>
</dbReference>
<dbReference type="GO" id="GO:0030170">
    <property type="term" value="F:pyridoxal phosphate binding"/>
    <property type="evidence" value="ECO:0007669"/>
    <property type="project" value="TreeGrafter"/>
</dbReference>
<dbReference type="GO" id="GO:0019464">
    <property type="term" value="P:glycine decarboxylation via glycine cleavage system"/>
    <property type="evidence" value="ECO:0007669"/>
    <property type="project" value="UniProtKB-UniRule"/>
</dbReference>
<dbReference type="CDD" id="cd00613">
    <property type="entry name" value="GDC-P"/>
    <property type="match status" value="1"/>
</dbReference>
<dbReference type="FunFam" id="3.40.640.10:FF:000034">
    <property type="entry name" value="Probable glycine dehydrogenase (decarboxylating) subunit 2"/>
    <property type="match status" value="1"/>
</dbReference>
<dbReference type="FunFam" id="3.90.1150.10:FF:000014">
    <property type="entry name" value="Probable glycine dehydrogenase (decarboxylating) subunit 2"/>
    <property type="match status" value="1"/>
</dbReference>
<dbReference type="Gene3D" id="6.20.440.10">
    <property type="match status" value="1"/>
</dbReference>
<dbReference type="Gene3D" id="3.90.1150.10">
    <property type="entry name" value="Aspartate Aminotransferase, domain 1"/>
    <property type="match status" value="1"/>
</dbReference>
<dbReference type="Gene3D" id="3.40.640.10">
    <property type="entry name" value="Type I PLP-dependent aspartate aminotransferase-like (Major domain)"/>
    <property type="match status" value="1"/>
</dbReference>
<dbReference type="HAMAP" id="MF_00713">
    <property type="entry name" value="GcvPB"/>
    <property type="match status" value="1"/>
</dbReference>
<dbReference type="InterPro" id="IPR023012">
    <property type="entry name" value="GcvPB"/>
</dbReference>
<dbReference type="InterPro" id="IPR049316">
    <property type="entry name" value="GDC-P_C"/>
</dbReference>
<dbReference type="InterPro" id="IPR049315">
    <property type="entry name" value="GDC-P_N"/>
</dbReference>
<dbReference type="InterPro" id="IPR020581">
    <property type="entry name" value="GDC_P"/>
</dbReference>
<dbReference type="InterPro" id="IPR015424">
    <property type="entry name" value="PyrdxlP-dep_Trfase"/>
</dbReference>
<dbReference type="InterPro" id="IPR015421">
    <property type="entry name" value="PyrdxlP-dep_Trfase_major"/>
</dbReference>
<dbReference type="InterPro" id="IPR015422">
    <property type="entry name" value="PyrdxlP-dep_Trfase_small"/>
</dbReference>
<dbReference type="NCBIfam" id="NF003346">
    <property type="entry name" value="PRK04366.1"/>
    <property type="match status" value="1"/>
</dbReference>
<dbReference type="PANTHER" id="PTHR11773:SF1">
    <property type="entry name" value="GLYCINE DEHYDROGENASE (DECARBOXYLATING), MITOCHONDRIAL"/>
    <property type="match status" value="1"/>
</dbReference>
<dbReference type="PANTHER" id="PTHR11773">
    <property type="entry name" value="GLYCINE DEHYDROGENASE, DECARBOXYLATING"/>
    <property type="match status" value="1"/>
</dbReference>
<dbReference type="Pfam" id="PF21478">
    <property type="entry name" value="GcvP2_C"/>
    <property type="match status" value="1"/>
</dbReference>
<dbReference type="Pfam" id="PF02347">
    <property type="entry name" value="GDC-P"/>
    <property type="match status" value="1"/>
</dbReference>
<dbReference type="SUPFAM" id="SSF53383">
    <property type="entry name" value="PLP-dependent transferases"/>
    <property type="match status" value="1"/>
</dbReference>
<comment type="function">
    <text evidence="1">The glycine cleavage system catalyzes the degradation of glycine. The P protein binds the alpha-amino group of glycine through its pyridoxal phosphate cofactor; CO(2) is released and the remaining methylamine moiety is then transferred to the lipoamide cofactor of the H protein.</text>
</comment>
<comment type="catalytic activity">
    <reaction evidence="1">
        <text>N(6)-[(R)-lipoyl]-L-lysyl-[glycine-cleavage complex H protein] + glycine + H(+) = N(6)-[(R)-S(8)-aminomethyldihydrolipoyl]-L-lysyl-[glycine-cleavage complex H protein] + CO2</text>
        <dbReference type="Rhea" id="RHEA:24304"/>
        <dbReference type="Rhea" id="RHEA-COMP:10494"/>
        <dbReference type="Rhea" id="RHEA-COMP:10495"/>
        <dbReference type="ChEBI" id="CHEBI:15378"/>
        <dbReference type="ChEBI" id="CHEBI:16526"/>
        <dbReference type="ChEBI" id="CHEBI:57305"/>
        <dbReference type="ChEBI" id="CHEBI:83099"/>
        <dbReference type="ChEBI" id="CHEBI:83143"/>
        <dbReference type="EC" id="1.4.4.2"/>
    </reaction>
</comment>
<comment type="cofactor">
    <cofactor evidence="1">
        <name>pyridoxal 5'-phosphate</name>
        <dbReference type="ChEBI" id="CHEBI:597326"/>
    </cofactor>
</comment>
<comment type="subunit">
    <text evidence="1">The glycine cleavage system is composed of four proteins: P, T, L and H. In this organism, the P 'protein' is a heterodimer of two subunits.</text>
</comment>
<comment type="similarity">
    <text evidence="1">Belongs to the GcvP family. C-terminal subunit subfamily.</text>
</comment>
<feature type="chain" id="PRO_0000167027" description="Probable glycine dehydrogenase (decarboxylating) subunit 2">
    <location>
        <begin position="1"/>
        <end position="502"/>
    </location>
</feature>
<feature type="modified residue" description="N6-(pyridoxal phosphate)lysine" evidence="1">
    <location>
        <position position="273"/>
    </location>
</feature>
<name>GCSPB_PYRAB</name>
<reference key="1">
    <citation type="journal article" date="2003" name="Mol. Microbiol.">
        <title>An integrated analysis of the genome of the hyperthermophilic archaeon Pyrococcus abyssi.</title>
        <authorList>
            <person name="Cohen G.N."/>
            <person name="Barbe V."/>
            <person name="Flament D."/>
            <person name="Galperin M."/>
            <person name="Heilig R."/>
            <person name="Lecompte O."/>
            <person name="Poch O."/>
            <person name="Prieur D."/>
            <person name="Querellou J."/>
            <person name="Ripp R."/>
            <person name="Thierry J.-C."/>
            <person name="Van der Oost J."/>
            <person name="Weissenbach J."/>
            <person name="Zivanovic Y."/>
            <person name="Forterre P."/>
        </authorList>
    </citation>
    <scope>NUCLEOTIDE SEQUENCE [LARGE SCALE GENOMIC DNA]</scope>
    <source>
        <strain>GE5 / Orsay</strain>
    </source>
</reference>
<reference key="2">
    <citation type="journal article" date="2012" name="Curr. Microbiol.">
        <title>Re-annotation of two hyperthermophilic archaea Pyrococcus abyssi GE5 and Pyrococcus furiosus DSM 3638.</title>
        <authorList>
            <person name="Gao J."/>
            <person name="Wang J."/>
        </authorList>
    </citation>
    <scope>GENOME REANNOTATION</scope>
    <source>
        <strain>GE5 / Orsay</strain>
    </source>
</reference>
<protein>
    <recommendedName>
        <fullName evidence="1">Probable glycine dehydrogenase (decarboxylating) subunit 2</fullName>
        <ecNumber evidence="1">1.4.4.2</ecNumber>
    </recommendedName>
    <alternativeName>
        <fullName evidence="1">Glycine cleavage system P-protein subunit 2</fullName>
    </alternativeName>
    <alternativeName>
        <fullName evidence="1">Glycine decarboxylase subunit 2</fullName>
    </alternativeName>
    <alternativeName>
        <fullName evidence="1">Glycine dehydrogenase (aminomethyl-transferring) subunit 2</fullName>
    </alternativeName>
</protein>
<organism>
    <name type="scientific">Pyrococcus abyssi (strain GE5 / Orsay)</name>
    <dbReference type="NCBI Taxonomy" id="272844"/>
    <lineage>
        <taxon>Archaea</taxon>
        <taxon>Methanobacteriati</taxon>
        <taxon>Methanobacteriota</taxon>
        <taxon>Thermococci</taxon>
        <taxon>Thermococcales</taxon>
        <taxon>Thermococcaceae</taxon>
        <taxon>Pyrococcus</taxon>
    </lineage>
</organism>
<proteinExistence type="inferred from homology"/>
<accession>Q9UXT1</accession>
<accession>G8ZKW0</accession>
<evidence type="ECO:0000255" key="1">
    <source>
        <dbReference type="HAMAP-Rule" id="MF_00713"/>
    </source>
</evidence>